<accession>Q6ZQ88</accession>
<accession>A3KG94</accession>
<accession>Q6PB53</accession>
<accession>Q8VEA1</accession>
<reference key="1">
    <citation type="journal article" date="2003" name="DNA Res.">
        <title>Prediction of the coding sequences of mouse homologues of KIAA gene: III. The complete nucleotide sequences of 500 mouse KIAA-homologous cDNAs identified by screening of terminal sequences of cDNA clones randomly sampled from size-fractionated libraries.</title>
        <authorList>
            <person name="Okazaki N."/>
            <person name="Kikuno R."/>
            <person name="Ohara R."/>
            <person name="Inamoto S."/>
            <person name="Koseki H."/>
            <person name="Hiraoka S."/>
            <person name="Saga Y."/>
            <person name="Nagase T."/>
            <person name="Ohara O."/>
            <person name="Koga H."/>
        </authorList>
    </citation>
    <scope>NUCLEOTIDE SEQUENCE [LARGE SCALE MRNA]</scope>
    <source>
        <tissue>Brain</tissue>
    </source>
</reference>
<reference key="2">
    <citation type="journal article" date="2009" name="PLoS Biol.">
        <title>Lineage-specific biology revealed by a finished genome assembly of the mouse.</title>
        <authorList>
            <person name="Church D.M."/>
            <person name="Goodstadt L."/>
            <person name="Hillier L.W."/>
            <person name="Zody M.C."/>
            <person name="Goldstein S."/>
            <person name="She X."/>
            <person name="Bult C.J."/>
            <person name="Agarwala R."/>
            <person name="Cherry J.L."/>
            <person name="DiCuccio M."/>
            <person name="Hlavina W."/>
            <person name="Kapustin Y."/>
            <person name="Meric P."/>
            <person name="Maglott D."/>
            <person name="Birtle Z."/>
            <person name="Marques A.C."/>
            <person name="Graves T."/>
            <person name="Zhou S."/>
            <person name="Teague B."/>
            <person name="Potamousis K."/>
            <person name="Churas C."/>
            <person name="Place M."/>
            <person name="Herschleb J."/>
            <person name="Runnheim R."/>
            <person name="Forrest D."/>
            <person name="Amos-Landgraf J."/>
            <person name="Schwartz D.C."/>
            <person name="Cheng Z."/>
            <person name="Lindblad-Toh K."/>
            <person name="Eichler E.E."/>
            <person name="Ponting C.P."/>
        </authorList>
    </citation>
    <scope>NUCLEOTIDE SEQUENCE [LARGE SCALE GENOMIC DNA]</scope>
    <source>
        <strain>C57BL/6J</strain>
    </source>
</reference>
<reference key="3">
    <citation type="journal article" date="2004" name="Genome Res.">
        <title>The status, quality, and expansion of the NIH full-length cDNA project: the Mammalian Gene Collection (MGC).</title>
        <authorList>
            <consortium name="The MGC Project Team"/>
        </authorList>
    </citation>
    <scope>NUCLEOTIDE SEQUENCE [LARGE SCALE MRNA]</scope>
    <source>
        <strain>C57BL/6J</strain>
        <tissue>Brain</tissue>
        <tissue>Mammary gland</tissue>
    </source>
</reference>
<reference key="4">
    <citation type="journal article" date="2005" name="Nature">
        <title>LSD1 demethylates repressive histone marks to promote androgen-receptor-dependent transcription.</title>
        <authorList>
            <person name="Metzger E."/>
            <person name="Wissmann M."/>
            <person name="Yin N."/>
            <person name="Mueller J.M."/>
            <person name="Schneider R."/>
            <person name="Peters A.H.F.M."/>
            <person name="Guenther T."/>
            <person name="Buettner R."/>
            <person name="Schuele R."/>
        </authorList>
    </citation>
    <scope>TISSUE SPECIFICITY</scope>
</reference>
<reference key="5">
    <citation type="journal article" date="2007" name="Mol. Cell">
        <title>Epigenetic regulation of hematopoietic differentiation by Gfi-1 and Gfi-1b is mediated by the cofactors CoREST and LSD1.</title>
        <authorList>
            <person name="Saleque S."/>
            <person name="Kim J."/>
            <person name="Rooke H.M."/>
            <person name="Orkin S.H."/>
        </authorList>
    </citation>
    <scope>IDENTIFICATION BY MASS SPECTROMETRY AS A COMPONENT OF A GFI-RCOR-KDM1A-HDAC COMPLEX</scope>
    <scope>INTERACTION WITH GFI1 AND GFI1B</scope>
    <scope>FUNCTION</scope>
</reference>
<reference key="6">
    <citation type="journal article" date="2009" name="Immunity">
        <title>The phagosomal proteome in interferon-gamma-activated macrophages.</title>
        <authorList>
            <person name="Trost M."/>
            <person name="English L."/>
            <person name="Lemieux S."/>
            <person name="Courcelles M."/>
            <person name="Desjardins M."/>
            <person name="Thibault P."/>
        </authorList>
    </citation>
    <scope>PHOSPHORYLATION [LARGE SCALE ANALYSIS] AT SER-167</scope>
    <scope>IDENTIFICATION BY MASS SPECTROMETRY [LARGE SCALE ANALYSIS]</scope>
</reference>
<reference key="7">
    <citation type="journal article" date="2009" name="Nat. Genet.">
        <title>The lysine demethylase LSD1 (KDM1) is required for maintenance of global DNA methylation.</title>
        <authorList>
            <person name="Wang J."/>
            <person name="Hevi S."/>
            <person name="Kurash J.K."/>
            <person name="Lei H."/>
            <person name="Gay F."/>
            <person name="Bajko J."/>
            <person name="Su H."/>
            <person name="Sun W."/>
            <person name="Chang H."/>
            <person name="Xu G."/>
            <person name="Gaudet F."/>
            <person name="Li E."/>
            <person name="Chen T."/>
        </authorList>
    </citation>
    <scope>FUNCTION</scope>
    <scope>DEVELOPMENTAL STAGE</scope>
</reference>
<reference key="8">
    <citation type="journal article" date="2010" name="Cell">
        <title>A tissue-specific atlas of mouse protein phosphorylation and expression.</title>
        <authorList>
            <person name="Huttlin E.L."/>
            <person name="Jedrychowski M.P."/>
            <person name="Elias J.E."/>
            <person name="Goswami T."/>
            <person name="Rad R."/>
            <person name="Beausoleil S.A."/>
            <person name="Villen J."/>
            <person name="Haas W."/>
            <person name="Sowa M.E."/>
            <person name="Gygi S.P."/>
        </authorList>
    </citation>
    <scope>PHOSPHORYLATION [LARGE SCALE ANALYSIS] AT SER-132 AND SER-138</scope>
    <scope>IDENTIFICATION BY MASS SPECTROMETRY [LARGE SCALE ANALYSIS]</scope>
    <source>
        <tissue>Brain</tissue>
        <tissue>Brown adipose tissue</tissue>
        <tissue>Heart</tissue>
        <tissue>Kidney</tissue>
        <tissue>Liver</tissue>
        <tissue>Lung</tissue>
        <tissue>Pancreas</tissue>
        <tissue>Spleen</tissue>
        <tissue>Testis</tissue>
    </source>
</reference>
<reference key="9">
    <citation type="journal article" date="2013" name="Development">
        <title>Insm1 controls development of pituitary endocrine cells and requires a SNAG domain for function and for recruitment of histone-modifying factors.</title>
        <authorList>
            <person name="Welcker J.E."/>
            <person name="Hernandez-Miranda L.R."/>
            <person name="Paul F.E."/>
            <person name="Jia S."/>
            <person name="Ivanov A."/>
            <person name="Selbach M."/>
            <person name="Birchmeier C."/>
        </authorList>
    </citation>
    <scope>INTERACTION WITH INSM1</scope>
</reference>
<reference key="10">
    <citation type="journal article" date="2014" name="Mol. Cell">
        <title>Destabilizing LSD1 by Jade-2 promotes neurogenesis: an antibraking system in neural development.</title>
        <authorList>
            <person name="Han X."/>
            <person name="Gui B."/>
            <person name="Xiong C."/>
            <person name="Zhao L."/>
            <person name="Liang J."/>
            <person name="Sun L."/>
            <person name="Yang X."/>
            <person name="Yu W."/>
            <person name="Si W."/>
            <person name="Yan R."/>
            <person name="Yi X."/>
            <person name="Zhang D."/>
            <person name="Li W."/>
            <person name="Li L."/>
            <person name="Yang J."/>
            <person name="Wang Y."/>
            <person name="Sun Y.E."/>
            <person name="Zhang D."/>
            <person name="Meng A."/>
            <person name="Shang Y."/>
        </authorList>
    </citation>
    <scope>INTERACTION WITH JADE2</scope>
    <scope>INDUCTION</scope>
    <scope>UBIQUITINATION</scope>
    <scope>DISRUPTION PHENOTYPE</scope>
</reference>
<reference key="11">
    <citation type="journal article" date="2015" name="Nat. Commun.">
        <title>Fgf and Esrrb integrate epigenetic and transcriptional networks that regulate self-renewal of trophoblast stem cells.</title>
        <authorList>
            <person name="Latos P.A."/>
            <person name="Goncalves A."/>
            <person name="Oxley D."/>
            <person name="Mohammed H."/>
            <person name="Turro E."/>
            <person name="Hemberger M."/>
        </authorList>
    </citation>
    <scope>INTERACTION WITH ESRRB</scope>
</reference>
<reference key="12">
    <citation type="journal article" date="2021" name="Sci. Adv.">
        <title>The SAM domain-containing protein 1 (SAMD1) acts as a repressive chromatin regulator at unmethylated CpG islands.</title>
        <authorList>
            <person name="Stielow B."/>
            <person name="Zhou Y."/>
            <person name="Cao Y."/>
            <person name="Simon C."/>
            <person name="Pogoda H.M."/>
            <person name="Jiang J."/>
            <person name="Ren Y."/>
            <person name="Phanor S.K."/>
            <person name="Rohner I."/>
            <person name="Nist A."/>
            <person name="Stiewe T."/>
            <person name="Hammerschmidt M."/>
            <person name="Shi Y."/>
            <person name="Bulyk M.L."/>
            <person name="Wang Z."/>
            <person name="Liefke R."/>
        </authorList>
    </citation>
    <scope>INTERACTION WITH SAMD1</scope>
    <scope>SUBCELLULAR LOCATION</scope>
</reference>
<organism>
    <name type="scientific">Mus musculus</name>
    <name type="common">Mouse</name>
    <dbReference type="NCBI Taxonomy" id="10090"/>
    <lineage>
        <taxon>Eukaryota</taxon>
        <taxon>Metazoa</taxon>
        <taxon>Chordata</taxon>
        <taxon>Craniata</taxon>
        <taxon>Vertebrata</taxon>
        <taxon>Euteleostomi</taxon>
        <taxon>Mammalia</taxon>
        <taxon>Eutheria</taxon>
        <taxon>Euarchontoglires</taxon>
        <taxon>Glires</taxon>
        <taxon>Rodentia</taxon>
        <taxon>Myomorpha</taxon>
        <taxon>Muroidea</taxon>
        <taxon>Muridae</taxon>
        <taxon>Murinae</taxon>
        <taxon>Mus</taxon>
        <taxon>Mus</taxon>
    </lineage>
</organism>
<sequence length="853" mass="92851">MLSGKKAAAAAAAAAAAAAAGTEAGSGAAGGAENGSEVAAPPAGLTGPTDMATGAAGERTPRKKEPPRASPPGGLAEPPGSAGPQAGPTAGPGSATPMETGIAETPEGRRTSRRKRAKVEYREMDESLANLSEDEYYSEEERNAKAEKEKKLPPPPPQAPPEEENESEPEEPSGVEGAAFQSRLPHDRMTSQEAACFPDIISGPQQTQKVFLFIRNRTLQLWLDNPKIQLTFEATLQQLEAPYNSDTVLVHRVHSYLERHGLINFGIYKRIKPLPIKKTGKVIIIGSGVSGLAAARQLQSFGMDVTLLEARDRVGGRVATFRKGNYVADLGAMVVTGLGGNPMAVVSKQVNMELAKIKQKCPLYEANGQAVPKEKDEMVEQEFNRLLEATSYLSHQLDFNVLNNKPVSLGQALEVVIQLQEKHVKDEQIEHWKKIVKTQEELKELLNKMVNLKEKIKELHQQYKEASEVKPPRDITAEFLVKSKHRDLTALCKEYDELAETQGKLEEKLQELEANPPSDVYLSSRDRQILDWHFANLEFANATPLSTLSLKHWDQDDDFEFTGSHLTVRNGYSCVPVALAEGLDIKLNTAVRQVRYTASGCEVIAVNTRSTSQTFIYKCDAVLCTLPLGVLKQQPPAVQFVPPLPEWKTSAVQRMGFGNLNKVVLCFDRVFWDPSVNLFGHVGSTTASRGELFLFWNLYKAPILLALVAGEAAGIMENISDDVIVGRCLAILKGIFGSSAVPQPKETVVSRWRADPWARGSYSYVAAGSSGNDYDLMAQPITPGPSIPGAPQPIPRLFFAGEHTIRNYPATVHGALLSGLREAGRIADQFLGAMYTLPRQATPGVPAQQSPSM</sequence>
<protein>
    <recommendedName>
        <fullName evidence="12">Lysine-specific histone demethylase 1A</fullName>
        <ecNumber evidence="1">1.14.99.66</ecNumber>
    </recommendedName>
    <alternativeName>
        <fullName>BRAF35-HDAC complex protein BHC110</fullName>
    </alternativeName>
    <alternativeName>
        <fullName>Flavin-containing amine oxidase domain-containing protein 2</fullName>
    </alternativeName>
</protein>
<dbReference type="EC" id="1.14.99.66" evidence="1"/>
<dbReference type="EMBL" id="AK129170">
    <property type="protein sequence ID" value="BAC97980.1"/>
    <property type="status" value="ALT_INIT"/>
    <property type="molecule type" value="mRNA"/>
</dbReference>
<dbReference type="EMBL" id="AL671173">
    <property type="status" value="NOT_ANNOTATED_CDS"/>
    <property type="molecule type" value="Genomic_DNA"/>
</dbReference>
<dbReference type="EMBL" id="BC019417">
    <property type="protein sequence ID" value="AAH19417.1"/>
    <property type="molecule type" value="mRNA"/>
</dbReference>
<dbReference type="EMBL" id="BC059885">
    <property type="protein sequence ID" value="AAH59885.1"/>
    <property type="status" value="ALT_INIT"/>
    <property type="molecule type" value="mRNA"/>
</dbReference>
<dbReference type="CCDS" id="CCDS51331.1"/>
<dbReference type="RefSeq" id="NP_598633.2">
    <property type="nucleotide sequence ID" value="NM_133872.2"/>
</dbReference>
<dbReference type="BMRB" id="Q6ZQ88"/>
<dbReference type="SMR" id="Q6ZQ88"/>
<dbReference type="BioGRID" id="221360">
    <property type="interactions" value="218"/>
</dbReference>
<dbReference type="CORUM" id="Q6ZQ88"/>
<dbReference type="DIP" id="DIP-38599N"/>
<dbReference type="FunCoup" id="Q6ZQ88">
    <property type="interactions" value="3218"/>
</dbReference>
<dbReference type="IntAct" id="Q6ZQ88">
    <property type="interactions" value="23"/>
</dbReference>
<dbReference type="MINT" id="Q6ZQ88"/>
<dbReference type="STRING" id="10090.ENSMUSP00000101473"/>
<dbReference type="ChEMBL" id="CHEMBL4295874"/>
<dbReference type="GlyGen" id="Q6ZQ88">
    <property type="glycosylation" value="3 sites"/>
</dbReference>
<dbReference type="iPTMnet" id="Q6ZQ88"/>
<dbReference type="PhosphoSitePlus" id="Q6ZQ88"/>
<dbReference type="jPOST" id="Q6ZQ88"/>
<dbReference type="PaxDb" id="10090-ENSMUSP00000111977"/>
<dbReference type="PeptideAtlas" id="Q6ZQ88"/>
<dbReference type="ProteomicsDB" id="264984"/>
<dbReference type="Pumba" id="Q6ZQ88"/>
<dbReference type="Antibodypedia" id="3136">
    <property type="antibodies" value="731 antibodies from 48 providers"/>
</dbReference>
<dbReference type="DNASU" id="99982"/>
<dbReference type="Ensembl" id="ENSMUST00000116273.9">
    <property type="protein sequence ID" value="ENSMUSP00000111977.3"/>
    <property type="gene ID" value="ENSMUSG00000036940.16"/>
</dbReference>
<dbReference type="GeneID" id="99982"/>
<dbReference type="KEGG" id="mmu:99982"/>
<dbReference type="UCSC" id="uc008vig.2">
    <property type="organism name" value="mouse"/>
</dbReference>
<dbReference type="AGR" id="MGI:1196256"/>
<dbReference type="CTD" id="23028"/>
<dbReference type="MGI" id="MGI:1196256">
    <property type="gene designation" value="Kdm1a"/>
</dbReference>
<dbReference type="VEuPathDB" id="HostDB:ENSMUSG00000036940"/>
<dbReference type="eggNOG" id="KOG0029">
    <property type="taxonomic scope" value="Eukaryota"/>
</dbReference>
<dbReference type="eggNOG" id="KOG0685">
    <property type="taxonomic scope" value="Eukaryota"/>
</dbReference>
<dbReference type="GeneTree" id="ENSGT00940000157193"/>
<dbReference type="InParanoid" id="Q6ZQ88"/>
<dbReference type="OrthoDB" id="9982100at2759"/>
<dbReference type="PhylomeDB" id="Q6ZQ88"/>
<dbReference type="TreeFam" id="TF312972"/>
<dbReference type="BRENDA" id="1.14.11.65">
    <property type="organism ID" value="3474"/>
</dbReference>
<dbReference type="BRENDA" id="1.14.99.66">
    <property type="organism ID" value="3474"/>
</dbReference>
<dbReference type="Reactome" id="R-MMU-3214815">
    <property type="pathway name" value="HDACs deacetylate histones"/>
</dbReference>
<dbReference type="Reactome" id="R-MMU-3214842">
    <property type="pathway name" value="HDMs demethylate histones"/>
</dbReference>
<dbReference type="Reactome" id="R-MMU-9018519">
    <property type="pathway name" value="Estrogen-dependent gene expression"/>
</dbReference>
<dbReference type="Reactome" id="R-MMU-983231">
    <property type="pathway name" value="Factors involved in megakaryocyte development and platelet production"/>
</dbReference>
<dbReference type="BioGRID-ORCS" id="99982">
    <property type="hits" value="19 hits in 129 CRISPR screens"/>
</dbReference>
<dbReference type="ChiTaRS" id="Kdm1a">
    <property type="organism name" value="mouse"/>
</dbReference>
<dbReference type="PRO" id="PR:Q6ZQ88"/>
<dbReference type="Proteomes" id="UP000000589">
    <property type="component" value="Chromosome 4"/>
</dbReference>
<dbReference type="RNAct" id="Q6ZQ88">
    <property type="molecule type" value="protein"/>
</dbReference>
<dbReference type="Bgee" id="ENSMUSG00000036940">
    <property type="expression patterns" value="Expressed in urethra and 298 other cell types or tissues"/>
</dbReference>
<dbReference type="ExpressionAtlas" id="Q6ZQ88">
    <property type="expression patterns" value="baseline and differential"/>
</dbReference>
<dbReference type="GO" id="GO:0000785">
    <property type="term" value="C:chromatin"/>
    <property type="evidence" value="ECO:0000314"/>
    <property type="project" value="BHF-UCL"/>
</dbReference>
<dbReference type="GO" id="GO:1990391">
    <property type="term" value="C:DNA repair complex"/>
    <property type="evidence" value="ECO:0000266"/>
    <property type="project" value="MGI"/>
</dbReference>
<dbReference type="GO" id="GO:0005634">
    <property type="term" value="C:nucleus"/>
    <property type="evidence" value="ECO:0000314"/>
    <property type="project" value="UniProtKB"/>
</dbReference>
<dbReference type="GO" id="GO:0032991">
    <property type="term" value="C:protein-containing complex"/>
    <property type="evidence" value="ECO:0000266"/>
    <property type="project" value="MGI"/>
</dbReference>
<dbReference type="GO" id="GO:0003682">
    <property type="term" value="F:chromatin binding"/>
    <property type="evidence" value="ECO:0000314"/>
    <property type="project" value="MGI"/>
</dbReference>
<dbReference type="GO" id="GO:0140297">
    <property type="term" value="F:DNA-binding transcription factor binding"/>
    <property type="evidence" value="ECO:0000353"/>
    <property type="project" value="BHF-UCL"/>
</dbReference>
<dbReference type="GO" id="GO:0019899">
    <property type="term" value="F:enzyme binding"/>
    <property type="evidence" value="ECO:0000353"/>
    <property type="project" value="BHF-UCL"/>
</dbReference>
<dbReference type="GO" id="GO:0140682">
    <property type="term" value="F:FAD-dependent H3K4me/H3K4me3 demethylase activity"/>
    <property type="evidence" value="ECO:0000314"/>
    <property type="project" value="MGI"/>
</dbReference>
<dbReference type="GO" id="GO:0050660">
    <property type="term" value="F:flavin adenine dinucleotide binding"/>
    <property type="evidence" value="ECO:0000250"/>
    <property type="project" value="UniProtKB"/>
</dbReference>
<dbReference type="GO" id="GO:0032452">
    <property type="term" value="F:histone demethylase activity"/>
    <property type="evidence" value="ECO:0000250"/>
    <property type="project" value="BHF-UCL"/>
</dbReference>
<dbReference type="GO" id="GO:0032453">
    <property type="term" value="F:histone H3K4 demethylase activity"/>
    <property type="evidence" value="ECO:0000315"/>
    <property type="project" value="MGI"/>
</dbReference>
<dbReference type="GO" id="GO:0032454">
    <property type="term" value="F:histone H3K9 demethylase activity"/>
    <property type="evidence" value="ECO:0000250"/>
    <property type="project" value="UniProtKB"/>
</dbReference>
<dbReference type="GO" id="GO:0140684">
    <property type="term" value="F:histone H3K9me2/H3K9me3 demethylase activity"/>
    <property type="evidence" value="ECO:0000315"/>
    <property type="project" value="BHF-UCL"/>
</dbReference>
<dbReference type="GO" id="GO:0106222">
    <property type="term" value="F:lncRNA binding"/>
    <property type="evidence" value="ECO:0000314"/>
    <property type="project" value="MGI"/>
</dbReference>
<dbReference type="GO" id="GO:0043426">
    <property type="term" value="F:MRF binding"/>
    <property type="evidence" value="ECO:0000353"/>
    <property type="project" value="BHF-UCL"/>
</dbReference>
<dbReference type="GO" id="GO:0050681">
    <property type="term" value="F:nuclear androgen receptor binding"/>
    <property type="evidence" value="ECO:0000250"/>
    <property type="project" value="UniProtKB"/>
</dbReference>
<dbReference type="GO" id="GO:0016491">
    <property type="term" value="F:oxidoreductase activity"/>
    <property type="evidence" value="ECO:0000250"/>
    <property type="project" value="UniProtKB"/>
</dbReference>
<dbReference type="GO" id="GO:1990841">
    <property type="term" value="F:promoter-specific chromatin binding"/>
    <property type="evidence" value="ECO:0000314"/>
    <property type="project" value="BHF-UCL"/>
</dbReference>
<dbReference type="GO" id="GO:0000978">
    <property type="term" value="F:RNA polymerase II cis-regulatory region sequence-specific DNA binding"/>
    <property type="evidence" value="ECO:0000314"/>
    <property type="project" value="UniProtKB"/>
</dbReference>
<dbReference type="GO" id="GO:0061629">
    <property type="term" value="F:RNA polymerase II-specific DNA-binding transcription factor binding"/>
    <property type="evidence" value="ECO:0000353"/>
    <property type="project" value="BHF-UCL"/>
</dbReference>
<dbReference type="GO" id="GO:0003713">
    <property type="term" value="F:transcription coactivator activity"/>
    <property type="evidence" value="ECO:0000315"/>
    <property type="project" value="BHF-UCL"/>
</dbReference>
<dbReference type="GO" id="GO:0003714">
    <property type="term" value="F:transcription corepressor activity"/>
    <property type="evidence" value="ECO:0000314"/>
    <property type="project" value="GO_Central"/>
</dbReference>
<dbReference type="GO" id="GO:0030154">
    <property type="term" value="P:cell differentiation"/>
    <property type="evidence" value="ECO:0000315"/>
    <property type="project" value="MGI"/>
</dbReference>
<dbReference type="GO" id="GO:0071480">
    <property type="term" value="P:cellular response to gamma radiation"/>
    <property type="evidence" value="ECO:0000266"/>
    <property type="project" value="MGI"/>
</dbReference>
<dbReference type="GO" id="GO:0034644">
    <property type="term" value="P:cellular response to UV"/>
    <property type="evidence" value="ECO:0000266"/>
    <property type="project" value="MGI"/>
</dbReference>
<dbReference type="GO" id="GO:0140861">
    <property type="term" value="P:DNA repair-dependent chromatin remodeling"/>
    <property type="evidence" value="ECO:0000314"/>
    <property type="project" value="MGI"/>
</dbReference>
<dbReference type="GO" id="GO:0030851">
    <property type="term" value="P:granulocyte differentiation"/>
    <property type="evidence" value="ECO:0000315"/>
    <property type="project" value="UniProtKB"/>
</dbReference>
<dbReference type="GO" id="GO:0055001">
    <property type="term" value="P:muscle cell development"/>
    <property type="evidence" value="ECO:0000315"/>
    <property type="project" value="BHF-UCL"/>
</dbReference>
<dbReference type="GO" id="GO:0050768">
    <property type="term" value="P:negative regulation of neurogenesis"/>
    <property type="evidence" value="ECO:0000314"/>
    <property type="project" value="MGI"/>
</dbReference>
<dbReference type="GO" id="GO:0000122">
    <property type="term" value="P:negative regulation of transcription by RNA polymerase II"/>
    <property type="evidence" value="ECO:0000314"/>
    <property type="project" value="BHF-UCL"/>
</dbReference>
<dbReference type="GO" id="GO:0160217">
    <property type="term" value="P:negative regulation of transcription initiation-coupled chromatin remodeling"/>
    <property type="evidence" value="ECO:0000250"/>
    <property type="project" value="UniProtKB"/>
</dbReference>
<dbReference type="GO" id="GO:1990138">
    <property type="term" value="P:neuron projection extension"/>
    <property type="evidence" value="ECO:0000315"/>
    <property type="project" value="MGI"/>
</dbReference>
<dbReference type="GO" id="GO:0021983">
    <property type="term" value="P:pituitary gland development"/>
    <property type="evidence" value="ECO:0000315"/>
    <property type="project" value="MGI"/>
</dbReference>
<dbReference type="GO" id="GO:0120162">
    <property type="term" value="P:positive regulation of cold-induced thermogenesis"/>
    <property type="evidence" value="ECO:0000315"/>
    <property type="project" value="YuBioLab"/>
</dbReference>
<dbReference type="GO" id="GO:0010718">
    <property type="term" value="P:positive regulation of epithelial to mesenchymal transition"/>
    <property type="evidence" value="ECO:0000250"/>
    <property type="project" value="UniProtKB"/>
</dbReference>
<dbReference type="GO" id="GO:0045648">
    <property type="term" value="P:positive regulation of erythrocyte differentiation"/>
    <property type="evidence" value="ECO:0000315"/>
    <property type="project" value="UniProtKB"/>
</dbReference>
<dbReference type="GO" id="GO:0045654">
    <property type="term" value="P:positive regulation of megakaryocyte differentiation"/>
    <property type="evidence" value="ECO:0000315"/>
    <property type="project" value="UniProtKB"/>
</dbReference>
<dbReference type="GO" id="GO:2000179">
    <property type="term" value="P:positive regulation of neural precursor cell proliferation"/>
    <property type="evidence" value="ECO:0000315"/>
    <property type="project" value="BHF-UCL"/>
</dbReference>
<dbReference type="GO" id="GO:0031398">
    <property type="term" value="P:positive regulation of protein ubiquitination"/>
    <property type="evidence" value="ECO:0000266"/>
    <property type="project" value="MGI"/>
</dbReference>
<dbReference type="GO" id="GO:2000648">
    <property type="term" value="P:positive regulation of stem cell proliferation"/>
    <property type="evidence" value="ECO:0000315"/>
    <property type="project" value="BHF-UCL"/>
</dbReference>
<dbReference type="GO" id="GO:0045944">
    <property type="term" value="P:positive regulation of transcription by RNA polymerase II"/>
    <property type="evidence" value="ECO:0000315"/>
    <property type="project" value="BHF-UCL"/>
</dbReference>
<dbReference type="GO" id="GO:0010569">
    <property type="term" value="P:regulation of double-strand break repair via homologous recombination"/>
    <property type="evidence" value="ECO:0000266"/>
    <property type="project" value="MGI"/>
</dbReference>
<dbReference type="GO" id="GO:0050767">
    <property type="term" value="P:regulation of neurogenesis"/>
    <property type="evidence" value="ECO:0000316"/>
    <property type="project" value="MGI"/>
</dbReference>
<dbReference type="GO" id="GO:0010725">
    <property type="term" value="P:regulation of primitive erythrocyte differentiation"/>
    <property type="evidence" value="ECO:0000315"/>
    <property type="project" value="UniProtKB"/>
</dbReference>
<dbReference type="GO" id="GO:0032880">
    <property type="term" value="P:regulation of protein localization"/>
    <property type="evidence" value="ECO:0000266"/>
    <property type="project" value="MGI"/>
</dbReference>
<dbReference type="GO" id="GO:0006357">
    <property type="term" value="P:regulation of transcription by RNA polymerase II"/>
    <property type="evidence" value="ECO:0000250"/>
    <property type="project" value="UniProtKB"/>
</dbReference>
<dbReference type="GO" id="GO:0006366">
    <property type="term" value="P:transcription by RNA polymerase II"/>
    <property type="evidence" value="ECO:0000315"/>
    <property type="project" value="MGI"/>
</dbReference>
<dbReference type="FunFam" id="3.50.50.60:FF:000027">
    <property type="entry name" value="Lysine-specific histone demethylase"/>
    <property type="match status" value="1"/>
</dbReference>
<dbReference type="FunFam" id="3.50.50.60:FF:000029">
    <property type="entry name" value="Lysine-specific histone demethylase"/>
    <property type="match status" value="1"/>
</dbReference>
<dbReference type="FunFam" id="3.90.660.10:FF:000001">
    <property type="entry name" value="Lysine-specific histone demethylase"/>
    <property type="match status" value="1"/>
</dbReference>
<dbReference type="FunFam" id="1.10.10.10:FF:000064">
    <property type="entry name" value="Lysine-specific histone demethylase 1A"/>
    <property type="match status" value="1"/>
</dbReference>
<dbReference type="FunFam" id="1.10.287.80:FF:000002">
    <property type="entry name" value="Lysine-specific histone demethylase 1A"/>
    <property type="match status" value="1"/>
</dbReference>
<dbReference type="Gene3D" id="3.90.660.10">
    <property type="match status" value="1"/>
</dbReference>
<dbReference type="Gene3D" id="1.10.287.80">
    <property type="entry name" value="ATP synthase, gamma subunit, helix hairpin domain"/>
    <property type="match status" value="1"/>
</dbReference>
<dbReference type="Gene3D" id="3.50.50.60">
    <property type="entry name" value="FAD/NAD(P)-binding domain"/>
    <property type="match status" value="2"/>
</dbReference>
<dbReference type="Gene3D" id="1.10.10.10">
    <property type="entry name" value="Winged helix-like DNA-binding domain superfamily/Winged helix DNA-binding domain"/>
    <property type="match status" value="1"/>
</dbReference>
<dbReference type="InterPro" id="IPR002937">
    <property type="entry name" value="Amino_oxidase"/>
</dbReference>
<dbReference type="InterPro" id="IPR036188">
    <property type="entry name" value="FAD/NAD-bd_sf"/>
</dbReference>
<dbReference type="InterPro" id="IPR050281">
    <property type="entry name" value="Flavin_monoamine_oxidase"/>
</dbReference>
<dbReference type="InterPro" id="IPR017366">
    <property type="entry name" value="Hist_Lys-spec_deMease"/>
</dbReference>
<dbReference type="InterPro" id="IPR009057">
    <property type="entry name" value="Homeodomain-like_sf"/>
</dbReference>
<dbReference type="InterPro" id="IPR007526">
    <property type="entry name" value="SWIRM"/>
</dbReference>
<dbReference type="InterPro" id="IPR036388">
    <property type="entry name" value="WH-like_DNA-bd_sf"/>
</dbReference>
<dbReference type="PANTHER" id="PTHR10742">
    <property type="entry name" value="FLAVIN MONOAMINE OXIDASE"/>
    <property type="match status" value="1"/>
</dbReference>
<dbReference type="PANTHER" id="PTHR10742:SF386">
    <property type="entry name" value="LYSINE-SPECIFIC HISTONE DEMETHYLASE 1A"/>
    <property type="match status" value="1"/>
</dbReference>
<dbReference type="Pfam" id="PF01593">
    <property type="entry name" value="Amino_oxidase"/>
    <property type="match status" value="1"/>
</dbReference>
<dbReference type="Pfam" id="PF04433">
    <property type="entry name" value="SWIRM"/>
    <property type="match status" value="1"/>
</dbReference>
<dbReference type="PIRSF" id="PIRSF038051">
    <property type="entry name" value="Histone_Lys-demethylase"/>
    <property type="match status" value="1"/>
</dbReference>
<dbReference type="SUPFAM" id="SSF54373">
    <property type="entry name" value="FAD-linked reductases, C-terminal domain"/>
    <property type="match status" value="1"/>
</dbReference>
<dbReference type="SUPFAM" id="SSF51905">
    <property type="entry name" value="FAD/NAD(P)-binding domain"/>
    <property type="match status" value="1"/>
</dbReference>
<dbReference type="SUPFAM" id="SSF46689">
    <property type="entry name" value="Homeodomain-like"/>
    <property type="match status" value="1"/>
</dbReference>
<dbReference type="PROSITE" id="PS50934">
    <property type="entry name" value="SWIRM"/>
    <property type="match status" value="1"/>
</dbReference>
<comment type="function">
    <text evidence="1 6 7">Histone demethylase that can demethylate both 'Lys-4' (H3K4me) and 'Lys-9' (H3K9me) of histone H3, thereby acting as a coactivator or a corepressor, depending on the context (PubMed:19098913). Acts by oxidizing the substrate by FAD to generate the corresponding imine that is subsequently hydrolyzed. Acts as a corepressor by mediating demethylation of H3K4me, a specific tag for epigenetic transcriptional activation. Demethylates both mono- (H3K4me1) and di-methylated (H3K4me2) H3K4me. May play a role in the repression of neuronal genes. Alone, it is unable to demethylate H3K4me on nucleosomes and requires the presence of RCOR1/CoREST to achieve such activity. Also acts as a coactivator of androgen receptor (ANDR)-dependent transcription, by being recruited to ANDR target genes and mediating demethylation of H3K9me, a specific tag for epigenetic transcriptional repression. The presence of PRKCB in ANDR-containing complexes, which mediates phosphorylation of 'Thr-6' of histone H3 (H3T6ph), a specific tag that prevents demethylation H3K4me, prevents H3K4me demethylase activity of KDM1A. Demethylates di-methylated 'Lys-370' of p53/TP53 which prevents interaction of p53/TP53 with TP53BP1 and represses p53/TP53-mediated transcriptional activation (By similarity). Demethylates and stabilizes the DNA methylase DNMT1 (By similarity). Demethylates methylated 'Lys-44' and methylated 'Lys-119' of SOX2 (By similarity). Required for gastrulation during embryogenesis. Component of a RCOR/GFI/KDM1A/HDAC complex that suppresses, via histone deacetylase (HDAC) recruitment, a number of genes implicated in multilineage blood cell development (PubMed:17707228). Facilitates epithelial-to-mesenchymal transition by acting as an effector of SNAI1-mediated transcription repression of epithelial markers E-cadherin/CDH1, CDN7 and KRT8. Required for the maintenance of the silenced state of the SNAI1 target genes E-cadherin/CDH1 and CDN7. Required for the repression of GIPR expression (By similarity).</text>
</comment>
<comment type="catalytic activity">
    <reaction evidence="1">
        <text>N(6),N(6)-dimethyl-L-lysyl(4)-[histone H3] + 2 A + 2 H2O = L-lysyl(4)-[histone H3] + 2 formaldehyde + 2 AH2</text>
        <dbReference type="Rhea" id="RHEA:60244"/>
        <dbReference type="Rhea" id="RHEA-COMP:15540"/>
        <dbReference type="Rhea" id="RHEA-COMP:15547"/>
        <dbReference type="ChEBI" id="CHEBI:13193"/>
        <dbReference type="ChEBI" id="CHEBI:15377"/>
        <dbReference type="ChEBI" id="CHEBI:16842"/>
        <dbReference type="ChEBI" id="CHEBI:17499"/>
        <dbReference type="ChEBI" id="CHEBI:29969"/>
        <dbReference type="ChEBI" id="CHEBI:61976"/>
        <dbReference type="EC" id="1.14.99.66"/>
    </reaction>
</comment>
<comment type="cofactor">
    <cofactor evidence="1">
        <name>FAD</name>
        <dbReference type="ChEBI" id="CHEBI:57692"/>
    </cofactor>
</comment>
<comment type="activity regulation">
    <text evidence="1">The N-terminal sequences of INSM1 and SNAI1 compete with histone H3 for the same binding site and thereby inhibit histone demethylation (in vitro).</text>
</comment>
<comment type="subunit">
    <text evidence="1 6 8 9 10 11">Component of a histone demethylase complex with RCOR1 (By similarity). Component of a BHC histone deacetylase complex that contains HDAC1, HDAC2, HMG20B, KDM1A, RCOR1 and PHF21A. The BHC complex may also contain ZMYM2, ZNF217, ZMYM3, GSE1 and GTF2I. In the complex, RCOR1 strongly enhances the demethylase activity and protects it from the proteasome while PHF21A inhibits the demethylase activity. Interacts with the androgen receptor (AR) (By similarity). Component of a RCOR/GFI/KDM1A/HDAC complex. Interacts directly with GFI1 and GFI1B (PubMed:17707228). Interacts with SNAI1 (via SNAG domain) (By similarity). Interacts with INSM1 (PubMed:24227653). Interacts (via AOD/Tower domain) with JADE2 (via C-terminus) (PubMed:25018020). Interacts with ESRRB; co-occupes the core set of ESRRB targets (PubMed:26206133). Interacts with SAMD1 (via WH domain); the interaction modulates KDM1A function (PubMed:33980486). Interacts with RBPJ (By similarity). Interacts with L3MBTL3 (By similarity). Interacts with ZMYND8 (By similarity).</text>
</comment>
<comment type="interaction">
    <interactant intactId="EBI-1216284">
        <id>Q6ZQ88</id>
    </interactant>
    <interactant intactId="EBI-2644207">
        <id>P53566</id>
        <label>Cebpa</label>
    </interactant>
    <organismsDiffer>false</organismsDiffer>
    <experiments>4</experiments>
</comment>
<comment type="interaction">
    <interactant intactId="EBI-1216284">
        <id>Q6ZQ88</id>
    </interactant>
    <interactant intactId="EBI-301912">
        <id>O09106</id>
        <label>Hdac1</label>
    </interactant>
    <organismsDiffer>false</organismsDiffer>
    <experiments>7</experiments>
</comment>
<comment type="interaction">
    <interactant intactId="EBI-1216284">
        <id>Q6ZQ88</id>
    </interactant>
    <interactant intactId="EBI-302251">
        <id>P70288</id>
        <label>Hdac2</label>
    </interactant>
    <organismsDiffer>false</organismsDiffer>
    <experiments>4</experiments>
</comment>
<comment type="interaction">
    <interactant intactId="EBI-1216284">
        <id>Q6ZQ88</id>
    </interactant>
    <interactant intactId="EBI-2337309">
        <id>Q8CFE3</id>
        <label>Rcor1</label>
    </interactant>
    <organismsDiffer>false</organismsDiffer>
    <experiments>2</experiments>
</comment>
<comment type="interaction">
    <interactant intactId="EBI-1216284">
        <id>Q6ZQ88</id>
    </interactant>
    <interactant intactId="EBI-927321">
        <id>Q9CQJ4</id>
        <label>Rnf2</label>
    </interactant>
    <organismsDiffer>false</organismsDiffer>
    <experiments>3</experiments>
</comment>
<comment type="interaction">
    <interactant intactId="EBI-1216284">
        <id>Q6ZQ88</id>
    </interactant>
    <interactant intactId="EBI-4394596">
        <id>O35615</id>
        <label>Zfpm1</label>
    </interactant>
    <organismsDiffer>false</organismsDiffer>
    <experiments>2</experiments>
</comment>
<comment type="subcellular location">
    <subcellularLocation>
        <location evidence="11">Nucleus</location>
    </subcellularLocation>
    <subcellularLocation>
        <location evidence="1">Chromosome</location>
    </subcellularLocation>
    <text evidence="1">Associates with chromatin.</text>
</comment>
<comment type="tissue specificity">
    <text evidence="5">Ubiquitously expressed.</text>
</comment>
<comment type="developmental stage">
    <text evidence="7">Zygotic expression first appears at the morula stage. In blastocysts, expressed in the inner cell mass and trophectodermal cells. In postimplantation embryos, expression becomes ubiquitous.</text>
</comment>
<comment type="induction">
    <text evidence="9">Down-regulated during neural differentiation.</text>
</comment>
<comment type="domain">
    <text evidence="1">The SWIRM domain may act as an anchor site for a histone tail.</text>
</comment>
<comment type="PTM">
    <text evidence="1">Acetylated by KAT8 in epithelial but not in mesenchymal cells, thereby regulating the epithelial-to-mesenchymal transition (By similarity). Acetylation by KAT8 reduces KDM1A association with nucleosomes, thereby decreasing histone H3 demethylation, leading to transcription activatio of target genes (By similarity).</text>
</comment>
<comment type="PTM">
    <text evidence="1 9">Polyubiquitinated by JADE2; which leads to its proteasomal degradation (PubMed:25018020). Deubiquitinated by USP38; preventing it from degradation by the 26S proteasome (By similarity).</text>
</comment>
<comment type="disruption phenotype">
    <text evidence="9">Promotes neural differentiation. Accelerated emergence of neural progenitors and mature neurons in differentiating embryonic stem cells.</text>
</comment>
<comment type="similarity">
    <text evidence="12">Belongs to the flavin monoamine oxidase family.</text>
</comment>
<comment type="sequence caution" evidence="12">
    <conflict type="erroneous initiation">
        <sequence resource="EMBL-CDS" id="AAH59885"/>
    </conflict>
    <text>Truncated N-terminus.</text>
</comment>
<comment type="sequence caution" evidence="12">
    <conflict type="erroneous initiation">
        <sequence resource="EMBL-CDS" id="BAC97980"/>
    </conflict>
    <text>Extended N-terminus.</text>
</comment>
<evidence type="ECO:0000250" key="1">
    <source>
        <dbReference type="UniProtKB" id="O60341"/>
    </source>
</evidence>
<evidence type="ECO:0000255" key="2"/>
<evidence type="ECO:0000255" key="3">
    <source>
        <dbReference type="PROSITE-ProRule" id="PRU00247"/>
    </source>
</evidence>
<evidence type="ECO:0000256" key="4">
    <source>
        <dbReference type="SAM" id="MobiDB-lite"/>
    </source>
</evidence>
<evidence type="ECO:0000269" key="5">
    <source>
    </source>
</evidence>
<evidence type="ECO:0000269" key="6">
    <source>
    </source>
</evidence>
<evidence type="ECO:0000269" key="7">
    <source>
    </source>
</evidence>
<evidence type="ECO:0000269" key="8">
    <source>
    </source>
</evidence>
<evidence type="ECO:0000269" key="9">
    <source>
    </source>
</evidence>
<evidence type="ECO:0000269" key="10">
    <source>
    </source>
</evidence>
<evidence type="ECO:0000269" key="11">
    <source>
    </source>
</evidence>
<evidence type="ECO:0000305" key="12"/>
<evidence type="ECO:0000312" key="13">
    <source>
        <dbReference type="MGI" id="MGI:1196256"/>
    </source>
</evidence>
<evidence type="ECO:0007744" key="14">
    <source>
    </source>
</evidence>
<evidence type="ECO:0007744" key="15">
    <source>
    </source>
</evidence>
<keyword id="KW-0007">Acetylation</keyword>
<keyword id="KW-0156">Chromatin regulator</keyword>
<keyword id="KW-0158">Chromosome</keyword>
<keyword id="KW-0175">Coiled coil</keyword>
<keyword id="KW-0217">Developmental protein</keyword>
<keyword id="KW-0274">FAD</keyword>
<keyword id="KW-0285">Flavoprotein</keyword>
<keyword id="KW-1017">Isopeptide bond</keyword>
<keyword id="KW-0539">Nucleus</keyword>
<keyword id="KW-0560">Oxidoreductase</keyword>
<keyword id="KW-0597">Phosphoprotein</keyword>
<keyword id="KW-1185">Reference proteome</keyword>
<keyword id="KW-0678">Repressor</keyword>
<keyword id="KW-0804">Transcription</keyword>
<keyword id="KW-0805">Transcription regulation</keyword>
<keyword id="KW-0832">Ubl conjugation</keyword>
<proteinExistence type="evidence at protein level"/>
<name>KDM1A_MOUSE</name>
<gene>
    <name evidence="13" type="primary">Kdm1a</name>
    <name type="synonym">Aof2</name>
    <name type="synonym">Kiaa0601</name>
    <name type="synonym">Lsd1</name>
</gene>
<feature type="chain" id="PRO_0000099882" description="Lysine-specific histone demethylase 1A">
    <location>
        <begin position="1"/>
        <end position="853"/>
    </location>
</feature>
<feature type="domain" description="SWIRM" evidence="3">
    <location>
        <begin position="175"/>
        <end position="274"/>
    </location>
</feature>
<feature type="region of interest" description="Disordered" evidence="4">
    <location>
        <begin position="1"/>
        <end position="177"/>
    </location>
</feature>
<feature type="region of interest" description="Demethylase activity" evidence="1">
    <location>
        <begin position="301"/>
        <end position="853"/>
    </location>
</feature>
<feature type="coiled-coil region" evidence="2">
    <location>
        <begin position="111"/>
        <end position="152"/>
    </location>
</feature>
<feature type="coiled-coil region" evidence="2">
    <location>
        <begin position="429"/>
        <end position="515"/>
    </location>
</feature>
<feature type="compositionally biased region" description="Low complexity" evidence="4">
    <location>
        <begin position="7"/>
        <end position="26"/>
    </location>
</feature>
<feature type="compositionally biased region" description="Low complexity" evidence="4">
    <location>
        <begin position="76"/>
        <end position="97"/>
    </location>
</feature>
<feature type="compositionally biased region" description="Basic and acidic residues" evidence="4">
    <location>
        <begin position="139"/>
        <end position="152"/>
    </location>
</feature>
<feature type="compositionally biased region" description="Acidic residues" evidence="4">
    <location>
        <begin position="161"/>
        <end position="173"/>
    </location>
</feature>
<feature type="binding site" evidence="1">
    <location>
        <position position="290"/>
    </location>
    <ligand>
        <name>FAD</name>
        <dbReference type="ChEBI" id="CHEBI:57692"/>
    </ligand>
</feature>
<feature type="binding site" evidence="1">
    <location>
        <position position="309"/>
    </location>
    <ligand>
        <name>FAD</name>
        <dbReference type="ChEBI" id="CHEBI:57692"/>
    </ligand>
</feature>
<feature type="binding site" evidence="1">
    <location>
        <position position="311"/>
    </location>
    <ligand>
        <name>FAD</name>
        <dbReference type="ChEBI" id="CHEBI:57692"/>
    </ligand>
</feature>
<feature type="binding site" evidence="1">
    <location>
        <position position="317"/>
    </location>
    <ligand>
        <name>FAD</name>
        <dbReference type="ChEBI" id="CHEBI:57692"/>
    </ligand>
</feature>
<feature type="binding site" evidence="1">
    <location>
        <begin position="333"/>
        <end position="334"/>
    </location>
    <ligand>
        <name>FAD</name>
        <dbReference type="ChEBI" id="CHEBI:57692"/>
    </ligand>
</feature>
<feature type="binding site" evidence="1">
    <location>
        <position position="802"/>
    </location>
    <ligand>
        <name>FAD</name>
        <dbReference type="ChEBI" id="CHEBI:57692"/>
    </ligand>
</feature>
<feature type="binding site" evidence="1">
    <location>
        <begin position="811"/>
        <end position="812"/>
    </location>
    <ligand>
        <name>FAD</name>
        <dbReference type="ChEBI" id="CHEBI:57692"/>
    </ligand>
</feature>
<feature type="modified residue" description="Phosphothreonine" evidence="1">
    <location>
        <position position="60"/>
    </location>
</feature>
<feature type="modified residue" description="Phosphothreonine" evidence="1">
    <location>
        <position position="105"/>
    </location>
</feature>
<feature type="modified residue" description="Phosphoserine" evidence="1">
    <location>
        <position position="127"/>
    </location>
</feature>
<feature type="modified residue" description="Phosphoserine" evidence="15">
    <location>
        <position position="132"/>
    </location>
</feature>
<feature type="modified residue" description="Phosphotyrosine" evidence="1">
    <location>
        <position position="136"/>
    </location>
</feature>
<feature type="modified residue" description="Phosphoserine" evidence="15">
    <location>
        <position position="138"/>
    </location>
</feature>
<feature type="modified residue" description="Phosphoserine" evidence="14">
    <location>
        <position position="167"/>
    </location>
</feature>
<feature type="modified residue" description="N6-acetyllysine" evidence="1">
    <location>
        <position position="433"/>
    </location>
</feature>
<feature type="modified residue" description="N6-acetyllysine" evidence="1">
    <location>
        <position position="434"/>
    </location>
</feature>
<feature type="modified residue" description="N6-acetyllysine" evidence="1">
    <location>
        <position position="437"/>
    </location>
</feature>
<feature type="modified residue" description="Phosphoserine" evidence="1">
    <location>
        <position position="612"/>
    </location>
</feature>
<feature type="modified residue" description="Phosphoserine" evidence="1">
    <location>
        <position position="850"/>
    </location>
</feature>
<feature type="cross-link" description="Glycyl lysine isopeptide (Lys-Gly) (interchain with G-Cter in SUMO2)" evidence="1">
    <location>
        <position position="443"/>
    </location>
</feature>
<feature type="cross-link" description="Glycyl lysine isopeptide (Lys-Gly) (interchain with G-Cter in SUMO2)" evidence="1">
    <location>
        <position position="470"/>
    </location>
</feature>
<feature type="cross-link" description="Glycyl lysine isopeptide (Lys-Gly) (interchain with G-Cter in ubiquitin)" evidence="1">
    <location>
        <position position="504"/>
    </location>
</feature>
<feature type="sequence conflict" description="In Ref. 3; AAH59885." evidence="12" ref="3">
    <original>P</original>
    <variation>S</variation>
    <location>
        <position position="226"/>
    </location>
</feature>